<evidence type="ECO:0000250" key="1"/>
<evidence type="ECO:0000305" key="2"/>
<evidence type="ECO:0007829" key="3">
    <source>
        <dbReference type="PDB" id="4NES"/>
    </source>
</evidence>
<feature type="chain" id="PRO_0000208535" description="UDP-N-acetylglucosamine 2-epimerase">
    <location>
        <begin position="1"/>
        <end position="366"/>
    </location>
</feature>
<feature type="active site" evidence="1">
    <location>
        <position position="207"/>
    </location>
</feature>
<feature type="strand" evidence="3">
    <location>
        <begin position="3"/>
        <end position="7"/>
    </location>
</feature>
<feature type="helix" evidence="3">
    <location>
        <begin position="10"/>
        <end position="23"/>
    </location>
</feature>
<feature type="strand" evidence="3">
    <location>
        <begin position="30"/>
        <end position="34"/>
    </location>
</feature>
<feature type="helix" evidence="3">
    <location>
        <begin position="41"/>
        <end position="43"/>
    </location>
</feature>
<feature type="helix" evidence="3">
    <location>
        <begin position="45"/>
        <end position="50"/>
    </location>
</feature>
<feature type="strand" evidence="3">
    <location>
        <begin position="57"/>
        <end position="59"/>
    </location>
</feature>
<feature type="helix" evidence="3">
    <location>
        <begin position="67"/>
        <end position="85"/>
    </location>
</feature>
<feature type="strand" evidence="3">
    <location>
        <begin position="88"/>
        <end position="96"/>
    </location>
</feature>
<feature type="helix" evidence="3">
    <location>
        <begin position="97"/>
        <end position="108"/>
    </location>
</feature>
<feature type="strand" evidence="3">
    <location>
        <begin position="112"/>
        <end position="117"/>
    </location>
</feature>
<feature type="helix" evidence="3">
    <location>
        <begin position="128"/>
        <end position="138"/>
    </location>
</feature>
<feature type="strand" evidence="3">
    <location>
        <begin position="141"/>
        <end position="147"/>
    </location>
</feature>
<feature type="helix" evidence="3">
    <location>
        <begin position="148"/>
        <end position="156"/>
    </location>
</feature>
<feature type="helix" evidence="3">
    <location>
        <begin position="161"/>
        <end position="163"/>
    </location>
</feature>
<feature type="strand" evidence="3">
    <location>
        <begin position="164"/>
        <end position="166"/>
    </location>
</feature>
<feature type="helix" evidence="3">
    <location>
        <begin position="170"/>
        <end position="183"/>
    </location>
</feature>
<feature type="helix" evidence="3">
    <location>
        <begin position="186"/>
        <end position="195"/>
    </location>
</feature>
<feature type="strand" evidence="3">
    <location>
        <begin position="201"/>
        <end position="205"/>
    </location>
</feature>
<feature type="helix" evidence="3">
    <location>
        <begin position="209"/>
        <end position="212"/>
    </location>
</feature>
<feature type="helix" evidence="3">
    <location>
        <begin position="215"/>
        <end position="232"/>
    </location>
</feature>
<feature type="strand" evidence="3">
    <location>
        <begin position="235"/>
        <end position="239"/>
    </location>
</feature>
<feature type="helix" evidence="3">
    <location>
        <begin position="242"/>
        <end position="250"/>
    </location>
</feature>
<feature type="helix" evidence="3">
    <location>
        <begin position="254"/>
        <end position="259"/>
    </location>
</feature>
<feature type="strand" evidence="3">
    <location>
        <begin position="263"/>
        <end position="266"/>
    </location>
</feature>
<feature type="helix" evidence="3">
    <location>
        <begin position="271"/>
        <end position="280"/>
    </location>
</feature>
<feature type="strand" evidence="3">
    <location>
        <begin position="282"/>
        <end position="286"/>
    </location>
</feature>
<feature type="helix" evidence="3">
    <location>
        <begin position="289"/>
        <end position="298"/>
    </location>
</feature>
<feature type="strand" evidence="3">
    <location>
        <begin position="302"/>
        <end position="304"/>
    </location>
</feature>
<feature type="helix" evidence="3">
    <location>
        <begin position="313"/>
        <end position="316"/>
    </location>
</feature>
<feature type="strand" evidence="3">
    <location>
        <begin position="319"/>
        <end position="322"/>
    </location>
</feature>
<feature type="helix" evidence="3">
    <location>
        <begin position="327"/>
        <end position="338"/>
    </location>
</feature>
<feature type="helix" evidence="3">
    <location>
        <begin position="353"/>
        <end position="363"/>
    </location>
</feature>
<proteinExistence type="evidence at protein level"/>
<accession>Q58899</accession>
<comment type="function">
    <text evidence="1">Catalyzes the reversible epimerization at C-2 of UDP-N-acetylglucosamine (UDP-GlcNAc) to produce UDP-N-acetylmannosamine (UDP-ManNAc), the activated donor of ManNAc residues.</text>
</comment>
<comment type="catalytic activity">
    <reaction>
        <text>UDP-N-acetyl-alpha-D-glucosamine = UDP-N-acetyl-alpha-D-mannosamine</text>
        <dbReference type="Rhea" id="RHEA:17213"/>
        <dbReference type="ChEBI" id="CHEBI:57705"/>
        <dbReference type="ChEBI" id="CHEBI:68623"/>
        <dbReference type="EC" id="5.1.3.14"/>
    </reaction>
</comment>
<comment type="subunit">
    <text evidence="1">Homodimer.</text>
</comment>
<comment type="subcellular location">
    <subcellularLocation>
        <location evidence="1">Cytoplasm</location>
    </subcellularLocation>
</comment>
<comment type="similarity">
    <text evidence="2">Belongs to the UDP-N-acetylglucosamine 2-epimerase family.</text>
</comment>
<sequence>MKLSIILGTRPEIIKLSPIIRALEKTNIDWHIIHTNQHYSENMDKIFFEELNLPNPKYNLNIGSGTHGEQTGKMLIEIEKVLLKEKPDVVVVQGDTNTVLAGALVASKLKIDVAHVEAGLRSFDRNMPEEINRVLTDHISSYLFAPTEIAKNNLLREGIEENKIFVVGNTIVDATLQNLKIAEKNENVRAFFNSVVIDDDYFLLTLHRAENVDNKERLKNIVEGIFEIIEIYDKAIIFSIHPRTKKRLKEFNLFDKLKSNKKIKIIEPVGYLEFLMLEKNAELILTDSGGVQEEACILKVPCITLRDNTERPETVEVGANILVGDNKEKLIKAVEIMLNKKRNWKNPFGNGKSGERIVRILTYGKY</sequence>
<dbReference type="EC" id="5.1.3.14"/>
<dbReference type="EMBL" id="L77117">
    <property type="protein sequence ID" value="AAB99517.1"/>
    <property type="molecule type" value="Genomic_DNA"/>
</dbReference>
<dbReference type="PIR" id="G64487">
    <property type="entry name" value="G64487"/>
</dbReference>
<dbReference type="RefSeq" id="WP_010871027.1">
    <property type="nucleotide sequence ID" value="NC_000909.1"/>
</dbReference>
<dbReference type="PDB" id="4NEQ">
    <property type="method" value="X-ray"/>
    <property type="resolution" value="2.85 A"/>
    <property type="chains" value="A=1-366"/>
</dbReference>
<dbReference type="PDB" id="4NES">
    <property type="method" value="X-ray"/>
    <property type="resolution" value="1.42 A"/>
    <property type="chains" value="A=1-366"/>
</dbReference>
<dbReference type="PDBsum" id="4NEQ"/>
<dbReference type="PDBsum" id="4NES"/>
<dbReference type="SMR" id="Q58899"/>
<dbReference type="FunCoup" id="Q58899">
    <property type="interactions" value="19"/>
</dbReference>
<dbReference type="STRING" id="243232.MJ_1504"/>
<dbReference type="PaxDb" id="243232-MJ_1504"/>
<dbReference type="EnsemblBacteria" id="AAB99517">
    <property type="protein sequence ID" value="AAB99517"/>
    <property type="gene ID" value="MJ_1504"/>
</dbReference>
<dbReference type="GeneID" id="1452411"/>
<dbReference type="KEGG" id="mja:MJ_1504"/>
<dbReference type="eggNOG" id="arCOG01392">
    <property type="taxonomic scope" value="Archaea"/>
</dbReference>
<dbReference type="HOGENOM" id="CLU_041674_0_1_2"/>
<dbReference type="InParanoid" id="Q58899"/>
<dbReference type="OrthoDB" id="7018at2157"/>
<dbReference type="PhylomeDB" id="Q58899"/>
<dbReference type="BRENDA" id="5.1.3.14">
    <property type="organism ID" value="3260"/>
</dbReference>
<dbReference type="EvolutionaryTrace" id="Q58899"/>
<dbReference type="Proteomes" id="UP000000805">
    <property type="component" value="Chromosome"/>
</dbReference>
<dbReference type="GO" id="GO:0005737">
    <property type="term" value="C:cytoplasm"/>
    <property type="evidence" value="ECO:0007669"/>
    <property type="project" value="UniProtKB-SubCell"/>
</dbReference>
<dbReference type="GO" id="GO:0008761">
    <property type="term" value="F:UDP-N-acetylglucosamine 2-epimerase activity"/>
    <property type="evidence" value="ECO:0007669"/>
    <property type="project" value="UniProtKB-EC"/>
</dbReference>
<dbReference type="CDD" id="cd03786">
    <property type="entry name" value="GTB_UDP-GlcNAc_2-Epimerase"/>
    <property type="match status" value="1"/>
</dbReference>
<dbReference type="Gene3D" id="3.40.50.2000">
    <property type="entry name" value="Glycogen Phosphorylase B"/>
    <property type="match status" value="2"/>
</dbReference>
<dbReference type="InterPro" id="IPR003331">
    <property type="entry name" value="UDP_GlcNAc_Epimerase_2_dom"/>
</dbReference>
<dbReference type="InterPro" id="IPR029767">
    <property type="entry name" value="WecB-like"/>
</dbReference>
<dbReference type="NCBIfam" id="TIGR00236">
    <property type="entry name" value="wecB"/>
    <property type="match status" value="1"/>
</dbReference>
<dbReference type="PANTHER" id="PTHR43174">
    <property type="entry name" value="UDP-N-ACETYLGLUCOSAMINE 2-EPIMERASE"/>
    <property type="match status" value="1"/>
</dbReference>
<dbReference type="PANTHER" id="PTHR43174:SF1">
    <property type="entry name" value="UDP-N-ACETYLGLUCOSAMINE 2-EPIMERASE"/>
    <property type="match status" value="1"/>
</dbReference>
<dbReference type="Pfam" id="PF02350">
    <property type="entry name" value="Epimerase_2"/>
    <property type="match status" value="1"/>
</dbReference>
<dbReference type="SUPFAM" id="SSF53756">
    <property type="entry name" value="UDP-Glycosyltransferase/glycogen phosphorylase"/>
    <property type="match status" value="1"/>
</dbReference>
<name>WECB_METJA</name>
<organism>
    <name type="scientific">Methanocaldococcus jannaschii (strain ATCC 43067 / DSM 2661 / JAL-1 / JCM 10045 / NBRC 100440)</name>
    <name type="common">Methanococcus jannaschii</name>
    <dbReference type="NCBI Taxonomy" id="243232"/>
    <lineage>
        <taxon>Archaea</taxon>
        <taxon>Methanobacteriati</taxon>
        <taxon>Methanobacteriota</taxon>
        <taxon>Methanomada group</taxon>
        <taxon>Methanococci</taxon>
        <taxon>Methanococcales</taxon>
        <taxon>Methanocaldococcaceae</taxon>
        <taxon>Methanocaldococcus</taxon>
    </lineage>
</organism>
<gene>
    <name type="primary">wecB</name>
    <name type="ordered locus">MJ1504</name>
</gene>
<reference key="1">
    <citation type="journal article" date="1996" name="Science">
        <title>Complete genome sequence of the methanogenic archaeon, Methanococcus jannaschii.</title>
        <authorList>
            <person name="Bult C.J."/>
            <person name="White O."/>
            <person name="Olsen G.J."/>
            <person name="Zhou L."/>
            <person name="Fleischmann R.D."/>
            <person name="Sutton G.G."/>
            <person name="Blake J.A."/>
            <person name="FitzGerald L.M."/>
            <person name="Clayton R.A."/>
            <person name="Gocayne J.D."/>
            <person name="Kerlavage A.R."/>
            <person name="Dougherty B.A."/>
            <person name="Tomb J.-F."/>
            <person name="Adams M.D."/>
            <person name="Reich C.I."/>
            <person name="Overbeek R."/>
            <person name="Kirkness E.F."/>
            <person name="Weinstock K.G."/>
            <person name="Merrick J.M."/>
            <person name="Glodek A."/>
            <person name="Scott J.L."/>
            <person name="Geoghagen N.S.M."/>
            <person name="Weidman J.F."/>
            <person name="Fuhrmann J.L."/>
            <person name="Nguyen D."/>
            <person name="Utterback T.R."/>
            <person name="Kelley J.M."/>
            <person name="Peterson J.D."/>
            <person name="Sadow P.W."/>
            <person name="Hanna M.C."/>
            <person name="Cotton M.D."/>
            <person name="Roberts K.M."/>
            <person name="Hurst M.A."/>
            <person name="Kaine B.P."/>
            <person name="Borodovsky M."/>
            <person name="Klenk H.-P."/>
            <person name="Fraser C.M."/>
            <person name="Smith H.O."/>
            <person name="Woese C.R."/>
            <person name="Venter J.C."/>
        </authorList>
    </citation>
    <scope>NUCLEOTIDE SEQUENCE [LARGE SCALE GENOMIC DNA]</scope>
    <source>
        <strain>ATCC 43067 / DSM 2661 / JAL-1 / JCM 10045 / NBRC 100440</strain>
    </source>
</reference>
<keyword id="KW-0002">3D-structure</keyword>
<keyword id="KW-0963">Cytoplasm</keyword>
<keyword id="KW-0413">Isomerase</keyword>
<keyword id="KW-1185">Reference proteome</keyword>
<protein>
    <recommendedName>
        <fullName>UDP-N-acetylglucosamine 2-epimerase</fullName>
        <ecNumber>5.1.3.14</ecNumber>
    </recommendedName>
    <alternativeName>
        <fullName>UDP-GlcNAc-2-epimerase</fullName>
    </alternativeName>
</protein>